<evidence type="ECO:0000255" key="1">
    <source>
        <dbReference type="HAMAP-Rule" id="MF_00180"/>
    </source>
</evidence>
<accession>A9KVB7</accession>
<protein>
    <recommendedName>
        <fullName evidence="1">3,4-dihydroxy-2-butanone 4-phosphate synthase</fullName>
        <shortName evidence="1">DHBP synthase</shortName>
        <ecNumber evidence="1">4.1.99.12</ecNumber>
    </recommendedName>
</protein>
<dbReference type="EC" id="4.1.99.12" evidence="1"/>
<dbReference type="EMBL" id="CP000891">
    <property type="protein sequence ID" value="ABX47321.1"/>
    <property type="molecule type" value="Genomic_DNA"/>
</dbReference>
<dbReference type="RefSeq" id="WP_006083662.1">
    <property type="nucleotide sequence ID" value="NC_009997.1"/>
</dbReference>
<dbReference type="SMR" id="A9KVB7"/>
<dbReference type="GeneID" id="11770498"/>
<dbReference type="KEGG" id="sbn:Sbal195_0139"/>
<dbReference type="HOGENOM" id="CLU_020273_3_0_6"/>
<dbReference type="UniPathway" id="UPA00275">
    <property type="reaction ID" value="UER00399"/>
</dbReference>
<dbReference type="Proteomes" id="UP000000770">
    <property type="component" value="Chromosome"/>
</dbReference>
<dbReference type="GO" id="GO:0005829">
    <property type="term" value="C:cytosol"/>
    <property type="evidence" value="ECO:0007669"/>
    <property type="project" value="TreeGrafter"/>
</dbReference>
<dbReference type="GO" id="GO:0008686">
    <property type="term" value="F:3,4-dihydroxy-2-butanone-4-phosphate synthase activity"/>
    <property type="evidence" value="ECO:0007669"/>
    <property type="project" value="UniProtKB-UniRule"/>
</dbReference>
<dbReference type="GO" id="GO:0000287">
    <property type="term" value="F:magnesium ion binding"/>
    <property type="evidence" value="ECO:0007669"/>
    <property type="project" value="UniProtKB-UniRule"/>
</dbReference>
<dbReference type="GO" id="GO:0030145">
    <property type="term" value="F:manganese ion binding"/>
    <property type="evidence" value="ECO:0007669"/>
    <property type="project" value="UniProtKB-UniRule"/>
</dbReference>
<dbReference type="GO" id="GO:0009231">
    <property type="term" value="P:riboflavin biosynthetic process"/>
    <property type="evidence" value="ECO:0007669"/>
    <property type="project" value="UniProtKB-UniRule"/>
</dbReference>
<dbReference type="FunFam" id="3.90.870.10:FF:000002">
    <property type="entry name" value="3,4-dihydroxy-2-butanone 4-phosphate synthase"/>
    <property type="match status" value="1"/>
</dbReference>
<dbReference type="Gene3D" id="3.90.870.10">
    <property type="entry name" value="DHBP synthase"/>
    <property type="match status" value="1"/>
</dbReference>
<dbReference type="HAMAP" id="MF_00180">
    <property type="entry name" value="RibB"/>
    <property type="match status" value="1"/>
</dbReference>
<dbReference type="InterPro" id="IPR017945">
    <property type="entry name" value="DHBP_synth_RibB-like_a/b_dom"/>
</dbReference>
<dbReference type="InterPro" id="IPR000422">
    <property type="entry name" value="DHBP_synthase_RibB"/>
</dbReference>
<dbReference type="NCBIfam" id="TIGR00506">
    <property type="entry name" value="ribB"/>
    <property type="match status" value="1"/>
</dbReference>
<dbReference type="PANTHER" id="PTHR21327:SF38">
    <property type="entry name" value="3,4-DIHYDROXY-2-BUTANONE 4-PHOSPHATE SYNTHASE"/>
    <property type="match status" value="1"/>
</dbReference>
<dbReference type="PANTHER" id="PTHR21327">
    <property type="entry name" value="GTP CYCLOHYDROLASE II-RELATED"/>
    <property type="match status" value="1"/>
</dbReference>
<dbReference type="Pfam" id="PF00926">
    <property type="entry name" value="DHBP_synthase"/>
    <property type="match status" value="1"/>
</dbReference>
<dbReference type="SUPFAM" id="SSF55821">
    <property type="entry name" value="YrdC/RibB"/>
    <property type="match status" value="1"/>
</dbReference>
<reference key="1">
    <citation type="submission" date="2007-11" db="EMBL/GenBank/DDBJ databases">
        <title>Complete sequence of chromosome of Shewanella baltica OS195.</title>
        <authorList>
            <consortium name="US DOE Joint Genome Institute"/>
            <person name="Copeland A."/>
            <person name="Lucas S."/>
            <person name="Lapidus A."/>
            <person name="Barry K."/>
            <person name="Glavina del Rio T."/>
            <person name="Dalin E."/>
            <person name="Tice H."/>
            <person name="Pitluck S."/>
            <person name="Chain P."/>
            <person name="Malfatti S."/>
            <person name="Shin M."/>
            <person name="Vergez L."/>
            <person name="Schmutz J."/>
            <person name="Larimer F."/>
            <person name="Land M."/>
            <person name="Hauser L."/>
            <person name="Kyrpides N."/>
            <person name="Kim E."/>
            <person name="Brettar I."/>
            <person name="Rodrigues J."/>
            <person name="Konstantinidis K."/>
            <person name="Klappenbach J."/>
            <person name="Hofle M."/>
            <person name="Tiedje J."/>
            <person name="Richardson P."/>
        </authorList>
    </citation>
    <scope>NUCLEOTIDE SEQUENCE [LARGE SCALE GENOMIC DNA]</scope>
    <source>
        <strain>OS195</strain>
    </source>
</reference>
<proteinExistence type="inferred from homology"/>
<gene>
    <name evidence="1" type="primary">ribB</name>
    <name type="ordered locus">Sbal195_0139</name>
</gene>
<keyword id="KW-0456">Lyase</keyword>
<keyword id="KW-0460">Magnesium</keyword>
<keyword id="KW-0464">Manganese</keyword>
<keyword id="KW-0479">Metal-binding</keyword>
<keyword id="KW-0686">Riboflavin biosynthesis</keyword>
<sequence>MNQSLLAPFGTAIERVEAGLNALRQGQGVLVVDDEDRENEGDLIFAAETLTNAQMAMLIRECSGIVCLCLPDEKVKALELPAMVEHNSSQYGTAFTVSIEATVGVTTGVSAADRVTTIKAAIADNAKPSDLARPGHVYPLRAQPGGVLTRRGHTEGTIDLVQLAGLKPAGVLCEVTNPDGTMARLPEIIAFGALHNMPVLTIEDIVVYRKSLLAKVG</sequence>
<name>RIBB_SHEB9</name>
<feature type="chain" id="PRO_1000077268" description="3,4-dihydroxy-2-butanone 4-phosphate synthase">
    <location>
        <begin position="1"/>
        <end position="217"/>
    </location>
</feature>
<feature type="binding site" evidence="1">
    <location>
        <begin position="37"/>
        <end position="38"/>
    </location>
    <ligand>
        <name>D-ribulose 5-phosphate</name>
        <dbReference type="ChEBI" id="CHEBI:58121"/>
    </ligand>
</feature>
<feature type="binding site" evidence="1">
    <location>
        <position position="38"/>
    </location>
    <ligand>
        <name>Mg(2+)</name>
        <dbReference type="ChEBI" id="CHEBI:18420"/>
        <label>1</label>
    </ligand>
</feature>
<feature type="binding site" evidence="1">
    <location>
        <position position="38"/>
    </location>
    <ligand>
        <name>Mg(2+)</name>
        <dbReference type="ChEBI" id="CHEBI:18420"/>
        <label>2</label>
    </ligand>
</feature>
<feature type="binding site" evidence="1">
    <location>
        <position position="42"/>
    </location>
    <ligand>
        <name>D-ribulose 5-phosphate</name>
        <dbReference type="ChEBI" id="CHEBI:58121"/>
    </ligand>
</feature>
<feature type="binding site" evidence="1">
    <location>
        <begin position="150"/>
        <end position="154"/>
    </location>
    <ligand>
        <name>D-ribulose 5-phosphate</name>
        <dbReference type="ChEBI" id="CHEBI:58121"/>
    </ligand>
</feature>
<feature type="binding site" evidence="1">
    <location>
        <position position="153"/>
    </location>
    <ligand>
        <name>Mg(2+)</name>
        <dbReference type="ChEBI" id="CHEBI:18420"/>
        <label>2</label>
    </ligand>
</feature>
<feature type="binding site" evidence="1">
    <location>
        <position position="174"/>
    </location>
    <ligand>
        <name>D-ribulose 5-phosphate</name>
        <dbReference type="ChEBI" id="CHEBI:58121"/>
    </ligand>
</feature>
<feature type="site" description="Essential for catalytic activity" evidence="1">
    <location>
        <position position="136"/>
    </location>
</feature>
<feature type="site" description="Essential for catalytic activity" evidence="1">
    <location>
        <position position="174"/>
    </location>
</feature>
<comment type="function">
    <text evidence="1">Catalyzes the conversion of D-ribulose 5-phosphate to formate and 3,4-dihydroxy-2-butanone 4-phosphate.</text>
</comment>
<comment type="catalytic activity">
    <reaction evidence="1">
        <text>D-ribulose 5-phosphate = (2S)-2-hydroxy-3-oxobutyl phosphate + formate + H(+)</text>
        <dbReference type="Rhea" id="RHEA:18457"/>
        <dbReference type="ChEBI" id="CHEBI:15378"/>
        <dbReference type="ChEBI" id="CHEBI:15740"/>
        <dbReference type="ChEBI" id="CHEBI:58121"/>
        <dbReference type="ChEBI" id="CHEBI:58830"/>
        <dbReference type="EC" id="4.1.99.12"/>
    </reaction>
</comment>
<comment type="cofactor">
    <cofactor evidence="1">
        <name>Mg(2+)</name>
        <dbReference type="ChEBI" id="CHEBI:18420"/>
    </cofactor>
    <cofactor evidence="1">
        <name>Mn(2+)</name>
        <dbReference type="ChEBI" id="CHEBI:29035"/>
    </cofactor>
    <text evidence="1">Binds 2 divalent metal cations per subunit. Magnesium or manganese.</text>
</comment>
<comment type="pathway">
    <text evidence="1">Cofactor biosynthesis; riboflavin biosynthesis; 2-hydroxy-3-oxobutyl phosphate from D-ribulose 5-phosphate: step 1/1.</text>
</comment>
<comment type="subunit">
    <text evidence="1">Homodimer.</text>
</comment>
<comment type="similarity">
    <text evidence="1">Belongs to the DHBP synthase family.</text>
</comment>
<organism>
    <name type="scientific">Shewanella baltica (strain OS195)</name>
    <dbReference type="NCBI Taxonomy" id="399599"/>
    <lineage>
        <taxon>Bacteria</taxon>
        <taxon>Pseudomonadati</taxon>
        <taxon>Pseudomonadota</taxon>
        <taxon>Gammaproteobacteria</taxon>
        <taxon>Alteromonadales</taxon>
        <taxon>Shewanellaceae</taxon>
        <taxon>Shewanella</taxon>
    </lineage>
</organism>